<keyword id="KW-0438">Lignin biosynthesis</keyword>
<keyword id="KW-0489">Methyltransferase</keyword>
<keyword id="KW-0949">S-adenosyl-L-methionine</keyword>
<keyword id="KW-0808">Transferase</keyword>
<gene>
    <name type="primary">HOMT3</name>
</gene>
<name>COMT3_POPKI</name>
<organism>
    <name type="scientific">Populus kitakamiensis</name>
    <name type="common">Aspen</name>
    <name type="synonym">Populus sieboldii x Populus grandidentata</name>
    <dbReference type="NCBI Taxonomy" id="34292"/>
    <lineage>
        <taxon>Eukaryota</taxon>
        <taxon>Viridiplantae</taxon>
        <taxon>Streptophyta</taxon>
        <taxon>Embryophyta</taxon>
        <taxon>Tracheophyta</taxon>
        <taxon>Spermatophyta</taxon>
        <taxon>Magnoliopsida</taxon>
        <taxon>eudicotyledons</taxon>
        <taxon>Gunneridae</taxon>
        <taxon>Pentapetalae</taxon>
        <taxon>rosids</taxon>
        <taxon>fabids</taxon>
        <taxon>Malpighiales</taxon>
        <taxon>Salicaceae</taxon>
        <taxon>Saliceae</taxon>
        <taxon>Populus</taxon>
    </lineage>
</organism>
<dbReference type="EC" id="2.1.1.68"/>
<dbReference type="EMBL" id="D49711">
    <property type="protein sequence ID" value="BAA08559.1"/>
    <property type="molecule type" value="Genomic_DNA"/>
</dbReference>
<dbReference type="SMR" id="Q43047"/>
<dbReference type="UniPathway" id="UPA00711"/>
<dbReference type="GO" id="GO:0047763">
    <property type="term" value="F:caffeate O-methyltransferase activity"/>
    <property type="evidence" value="ECO:0007669"/>
    <property type="project" value="UniProtKB-EC"/>
</dbReference>
<dbReference type="GO" id="GO:0046983">
    <property type="term" value="F:protein dimerization activity"/>
    <property type="evidence" value="ECO:0007669"/>
    <property type="project" value="InterPro"/>
</dbReference>
<dbReference type="GO" id="GO:0009809">
    <property type="term" value="P:lignin biosynthetic process"/>
    <property type="evidence" value="ECO:0007669"/>
    <property type="project" value="UniProtKB-KW"/>
</dbReference>
<dbReference type="GO" id="GO:0032259">
    <property type="term" value="P:methylation"/>
    <property type="evidence" value="ECO:0007669"/>
    <property type="project" value="UniProtKB-KW"/>
</dbReference>
<dbReference type="CDD" id="cd02440">
    <property type="entry name" value="AdoMet_MTases"/>
    <property type="match status" value="1"/>
</dbReference>
<dbReference type="FunFam" id="1.10.10.10:FF:000357">
    <property type="entry name" value="Caffeic acid 3-O-methyltransferase"/>
    <property type="match status" value="1"/>
</dbReference>
<dbReference type="FunFam" id="3.40.50.150:FF:000061">
    <property type="entry name" value="Caffeic acid O-methyltransferase"/>
    <property type="match status" value="1"/>
</dbReference>
<dbReference type="Gene3D" id="3.40.50.150">
    <property type="entry name" value="Vaccinia Virus protein VP39"/>
    <property type="match status" value="1"/>
</dbReference>
<dbReference type="Gene3D" id="1.10.10.10">
    <property type="entry name" value="Winged helix-like DNA-binding domain superfamily/Winged helix DNA-binding domain"/>
    <property type="match status" value="1"/>
</dbReference>
<dbReference type="InterPro" id="IPR016461">
    <property type="entry name" value="COMT-like"/>
</dbReference>
<dbReference type="InterPro" id="IPR001077">
    <property type="entry name" value="O_MeTrfase_dom"/>
</dbReference>
<dbReference type="InterPro" id="IPR012967">
    <property type="entry name" value="Plant_O-MeTrfase_dimerisation"/>
</dbReference>
<dbReference type="InterPro" id="IPR029063">
    <property type="entry name" value="SAM-dependent_MTases_sf"/>
</dbReference>
<dbReference type="InterPro" id="IPR036388">
    <property type="entry name" value="WH-like_DNA-bd_sf"/>
</dbReference>
<dbReference type="InterPro" id="IPR036390">
    <property type="entry name" value="WH_DNA-bd_sf"/>
</dbReference>
<dbReference type="PANTHER" id="PTHR11746">
    <property type="entry name" value="O-METHYLTRANSFERASE"/>
    <property type="match status" value="1"/>
</dbReference>
<dbReference type="Pfam" id="PF08100">
    <property type="entry name" value="Dimerisation"/>
    <property type="match status" value="1"/>
</dbReference>
<dbReference type="Pfam" id="PF00891">
    <property type="entry name" value="Methyltransf_2"/>
    <property type="match status" value="1"/>
</dbReference>
<dbReference type="PIRSF" id="PIRSF005739">
    <property type="entry name" value="O-mtase"/>
    <property type="match status" value="1"/>
</dbReference>
<dbReference type="SUPFAM" id="SSF53335">
    <property type="entry name" value="S-adenosyl-L-methionine-dependent methyltransferases"/>
    <property type="match status" value="1"/>
</dbReference>
<dbReference type="SUPFAM" id="SSF46785">
    <property type="entry name" value="Winged helix' DNA-binding domain"/>
    <property type="match status" value="1"/>
</dbReference>
<dbReference type="PROSITE" id="PS51683">
    <property type="entry name" value="SAM_OMT_II"/>
    <property type="match status" value="1"/>
</dbReference>
<accession>Q43047</accession>
<evidence type="ECO:0000250" key="1"/>
<evidence type="ECO:0000255" key="2">
    <source>
        <dbReference type="PROSITE-ProRule" id="PRU01020"/>
    </source>
</evidence>
<protein>
    <recommendedName>
        <fullName>Caffeic acid 3-O-methyltransferase 3</fullName>
        <shortName>CAOMT-3</shortName>
        <shortName>COMT-3</shortName>
        <ecNumber>2.1.1.68</ecNumber>
    </recommendedName>
    <alternativeName>
        <fullName>S-adenosysl-L-methionine:caffeic acid 3-O-methyltransferase 1</fullName>
    </alternativeName>
</protein>
<sequence length="364" mass="39576">MGSTGETQMSPAQILDEEANFAMQLISSSVLPMVLKTAIELDLLEIMAKAGPGALLSPSDIASHLPTKNPDAPVMLDRILRLLASYSILICSLRDLPDGKVERLYGLASVCKFLTKNEDGVSVSPLCLMNQDKVLMESWYHLKDAILEGGIPFNKAYGMTAFEYHGTDPRFNKVFNKGMSDHSKMAMKKILESYKGFEGLASLVDVGGGTGAVVSTIVSKYPSIKGINFDLPHVIADAPAFPGVENVGGDMFVSVPKADAVFMKWICHDWSDEHCLRLLKNCYDALPENGKVILVECILPVAPDTSLATKGVMHVDAIMLAHNPGGKERTDKEFEGLARGAGFKGFEVMCCAFNTHVIEFRKQA</sequence>
<feature type="chain" id="PRO_0000063208" description="Caffeic acid 3-O-methyltransferase 3">
    <location>
        <begin position="1"/>
        <end position="364"/>
    </location>
</feature>
<feature type="region of interest" description="Substrate binding" evidence="1">
    <location>
        <begin position="161"/>
        <end position="179"/>
    </location>
</feature>
<feature type="active site" description="Proton acceptor" evidence="2">
    <location>
        <position position="268"/>
    </location>
</feature>
<feature type="binding site" evidence="1">
    <location>
        <begin position="129"/>
        <end position="135"/>
    </location>
    <ligand>
        <name>substrate</name>
    </ligand>
</feature>
<feature type="binding site" evidence="2">
    <location>
        <position position="207"/>
    </location>
    <ligand>
        <name>S-adenosyl-L-methionine</name>
        <dbReference type="ChEBI" id="CHEBI:59789"/>
    </ligand>
</feature>
<feature type="binding site" evidence="2">
    <location>
        <position position="230"/>
    </location>
    <ligand>
        <name>S-adenosyl-L-methionine</name>
        <dbReference type="ChEBI" id="CHEBI:59789"/>
    </ligand>
</feature>
<feature type="binding site" evidence="2">
    <location>
        <position position="250"/>
    </location>
    <ligand>
        <name>S-adenosyl-L-methionine</name>
        <dbReference type="ChEBI" id="CHEBI:59789"/>
    </ligand>
</feature>
<feature type="binding site" evidence="2">
    <location>
        <position position="251"/>
    </location>
    <ligand>
        <name>S-adenosyl-L-methionine</name>
        <dbReference type="ChEBI" id="CHEBI:59789"/>
    </ligand>
</feature>
<feature type="binding site" evidence="2">
    <location>
        <position position="264"/>
    </location>
    <ligand>
        <name>S-adenosyl-L-methionine</name>
        <dbReference type="ChEBI" id="CHEBI:59789"/>
    </ligand>
</feature>
<reference key="1">
    <citation type="journal article" date="1996" name="Plant Sci.">
        <title>Molecular cloning and tissue-specific expression of two genes that encode caffeic acid O-methyltransferases from Populus kitakamiensis.</title>
        <authorList>
            <person name="Hayakawa T."/>
            <person name="Nanto K."/>
            <person name="Kawai S."/>
            <person name="Katayama Y."/>
            <person name="Morohoshi N."/>
        </authorList>
    </citation>
    <scope>NUCLEOTIDE SEQUENCE [GENOMIC DNA]</scope>
</reference>
<proteinExistence type="inferred from homology"/>
<comment type="function">
    <text>Catalyzes the conversion of caffeic acid to ferulic acid and of 5-hydroxyferulic acid to sinapic acid. The resulting products may subsequently be converted to the corresponding alcohols that are incorporated into lignins.</text>
</comment>
<comment type="catalytic activity">
    <reaction>
        <text>(E)-caffeate + S-adenosyl-L-methionine = (E)-ferulate + S-adenosyl-L-homocysteine + H(+)</text>
        <dbReference type="Rhea" id="RHEA:20225"/>
        <dbReference type="ChEBI" id="CHEBI:15378"/>
        <dbReference type="ChEBI" id="CHEBI:29749"/>
        <dbReference type="ChEBI" id="CHEBI:57770"/>
        <dbReference type="ChEBI" id="CHEBI:57856"/>
        <dbReference type="ChEBI" id="CHEBI:59789"/>
        <dbReference type="EC" id="2.1.1.68"/>
    </reaction>
</comment>
<comment type="pathway">
    <text>Aromatic compound metabolism; phenylpropanoid biosynthesis.</text>
</comment>
<comment type="subunit">
    <text evidence="1">Homodimer.</text>
</comment>
<comment type="similarity">
    <text evidence="2">Belongs to the class I-like SAM-binding methyltransferase superfamily. Cation-independent O-methyltransferase family. COMT subfamily.</text>
</comment>